<sequence>MRELVRPARLAPGARVAVVAPSGPVPEERLQAGLDVLRGWDLDPVVAPHVLDRHDTFDYLAGTDADRAADLQAAWCDPAVDAVLCARGGYGVQRMADLLDWEAMRAAGPKVFVGFSDITALHEAFATRLGLVTLHGPMAAGIDFIKNARAQEHLRATLFAPETVRVITSGGTPLVPGRARGVTLGGCLALLAADLGTPHARPGARGGLLCLEDVGEETYRIDRYLTQLLRSGWLDGVGGVLLGSWAQCEPYERLRPLLADRLGGLGVPVVEDFGFGHCEGALTVPFGVPAELDADTGTLTLDRPALCSPG</sequence>
<comment type="similarity">
    <text evidence="2">Belongs to the peptidase S66 family.</text>
</comment>
<name>Y6489_STRCO</name>
<proteinExistence type="inferred from homology"/>
<reference key="1">
    <citation type="journal article" date="2002" name="Nature">
        <title>Complete genome sequence of the model actinomycete Streptomyces coelicolor A3(2).</title>
        <authorList>
            <person name="Bentley S.D."/>
            <person name="Chater K.F."/>
            <person name="Cerdeno-Tarraga A.-M."/>
            <person name="Challis G.L."/>
            <person name="Thomson N.R."/>
            <person name="James K.D."/>
            <person name="Harris D.E."/>
            <person name="Quail M.A."/>
            <person name="Kieser H."/>
            <person name="Harper D."/>
            <person name="Bateman A."/>
            <person name="Brown S."/>
            <person name="Chandra G."/>
            <person name="Chen C.W."/>
            <person name="Collins M."/>
            <person name="Cronin A."/>
            <person name="Fraser A."/>
            <person name="Goble A."/>
            <person name="Hidalgo J."/>
            <person name="Hornsby T."/>
            <person name="Howarth S."/>
            <person name="Huang C.-H."/>
            <person name="Kieser T."/>
            <person name="Larke L."/>
            <person name="Murphy L.D."/>
            <person name="Oliver K."/>
            <person name="O'Neil S."/>
            <person name="Rabbinowitsch E."/>
            <person name="Rajandream M.A."/>
            <person name="Rutherford K.M."/>
            <person name="Rutter S."/>
            <person name="Seeger K."/>
            <person name="Saunders D."/>
            <person name="Sharp S."/>
            <person name="Squares R."/>
            <person name="Squares S."/>
            <person name="Taylor K."/>
            <person name="Warren T."/>
            <person name="Wietzorrek A."/>
            <person name="Woodward J.R."/>
            <person name="Barrell B.G."/>
            <person name="Parkhill J."/>
            <person name="Hopwood D.A."/>
        </authorList>
    </citation>
    <scope>NUCLEOTIDE SEQUENCE [LARGE SCALE GENOMIC DNA]</scope>
    <source>
        <strain>ATCC BAA-471 / A3(2) / M145</strain>
    </source>
</reference>
<keyword id="KW-0121">Carboxypeptidase</keyword>
<keyword id="KW-0378">Hydrolase</keyword>
<keyword id="KW-0645">Protease</keyword>
<keyword id="KW-1185">Reference proteome</keyword>
<keyword id="KW-0720">Serine protease</keyword>
<organism>
    <name type="scientific">Streptomyces coelicolor (strain ATCC BAA-471 / A3(2) / M145)</name>
    <dbReference type="NCBI Taxonomy" id="100226"/>
    <lineage>
        <taxon>Bacteria</taxon>
        <taxon>Bacillati</taxon>
        <taxon>Actinomycetota</taxon>
        <taxon>Actinomycetes</taxon>
        <taxon>Kitasatosporales</taxon>
        <taxon>Streptomycetaceae</taxon>
        <taxon>Streptomyces</taxon>
        <taxon>Streptomyces albidoflavus group</taxon>
    </lineage>
</organism>
<feature type="chain" id="PRO_0000172845" description="Putative carboxypeptidase SCO6489">
    <location>
        <begin position="1"/>
        <end position="310"/>
    </location>
</feature>
<feature type="active site" description="Nucleophile" evidence="1">
    <location>
        <position position="116"/>
    </location>
</feature>
<feature type="active site" description="Charge relay system" evidence="1">
    <location>
        <position position="212"/>
    </location>
</feature>
<feature type="active site" description="Charge relay system" evidence="1">
    <location>
        <position position="277"/>
    </location>
</feature>
<protein>
    <recommendedName>
        <fullName>Putative carboxypeptidase SCO6489</fullName>
        <ecNumber>3.4.16.-</ecNumber>
    </recommendedName>
</protein>
<gene>
    <name type="ordered locus">SCO6489</name>
    <name type="ORF">SC9C7.25</name>
</gene>
<dbReference type="EC" id="3.4.16.-"/>
<dbReference type="EMBL" id="AL939128">
    <property type="protein sequence ID" value="CAA22737.1"/>
    <property type="molecule type" value="Genomic_DNA"/>
</dbReference>
<dbReference type="PIR" id="T35976">
    <property type="entry name" value="T35976"/>
</dbReference>
<dbReference type="RefSeq" id="NP_630572.1">
    <property type="nucleotide sequence ID" value="NC_003888.3"/>
</dbReference>
<dbReference type="SMR" id="Q9ZBI5"/>
<dbReference type="STRING" id="100226.gene:17764146"/>
<dbReference type="MEROPS" id="S66.001"/>
<dbReference type="PaxDb" id="100226-SCO6489"/>
<dbReference type="KEGG" id="sco:SCO6489"/>
<dbReference type="PATRIC" id="fig|100226.15.peg.6590"/>
<dbReference type="eggNOG" id="COG1619">
    <property type="taxonomic scope" value="Bacteria"/>
</dbReference>
<dbReference type="HOGENOM" id="CLU_034346_3_1_11"/>
<dbReference type="InParanoid" id="Q9ZBI5"/>
<dbReference type="OrthoDB" id="9807329at2"/>
<dbReference type="PhylomeDB" id="Q9ZBI5"/>
<dbReference type="Proteomes" id="UP000001973">
    <property type="component" value="Chromosome"/>
</dbReference>
<dbReference type="GO" id="GO:0005829">
    <property type="term" value="C:cytosol"/>
    <property type="evidence" value="ECO:0000318"/>
    <property type="project" value="GO_Central"/>
</dbReference>
<dbReference type="GO" id="GO:0004180">
    <property type="term" value="F:carboxypeptidase activity"/>
    <property type="evidence" value="ECO:0000318"/>
    <property type="project" value="GO_Central"/>
</dbReference>
<dbReference type="GO" id="GO:0008236">
    <property type="term" value="F:serine-type peptidase activity"/>
    <property type="evidence" value="ECO:0007669"/>
    <property type="project" value="UniProtKB-KW"/>
</dbReference>
<dbReference type="GO" id="GO:0006508">
    <property type="term" value="P:proteolysis"/>
    <property type="evidence" value="ECO:0007669"/>
    <property type="project" value="UniProtKB-KW"/>
</dbReference>
<dbReference type="CDD" id="cd07025">
    <property type="entry name" value="Peptidase_S66"/>
    <property type="match status" value="1"/>
</dbReference>
<dbReference type="Gene3D" id="3.40.50.10740">
    <property type="entry name" value="Class I glutamine amidotransferase-like"/>
    <property type="match status" value="1"/>
</dbReference>
<dbReference type="Gene3D" id="3.50.30.60">
    <property type="entry name" value="LD-carboxypeptidase A C-terminal domain-like"/>
    <property type="match status" value="1"/>
</dbReference>
<dbReference type="InterPro" id="IPR027461">
    <property type="entry name" value="Carboxypeptidase_A_C_sf"/>
</dbReference>
<dbReference type="InterPro" id="IPR029062">
    <property type="entry name" value="Class_I_gatase-like"/>
</dbReference>
<dbReference type="InterPro" id="IPR027478">
    <property type="entry name" value="LdcA_N"/>
</dbReference>
<dbReference type="InterPro" id="IPR040449">
    <property type="entry name" value="Peptidase_S66_N"/>
</dbReference>
<dbReference type="InterPro" id="IPR040921">
    <property type="entry name" value="Peptidase_S66C"/>
</dbReference>
<dbReference type="InterPro" id="IPR003507">
    <property type="entry name" value="S66_fam"/>
</dbReference>
<dbReference type="PANTHER" id="PTHR30237">
    <property type="entry name" value="MURAMOYLTETRAPEPTIDE CARBOXYPEPTIDASE"/>
    <property type="match status" value="1"/>
</dbReference>
<dbReference type="PANTHER" id="PTHR30237:SF2">
    <property type="entry name" value="MUREIN TETRAPEPTIDE CARBOXYPEPTIDASE"/>
    <property type="match status" value="1"/>
</dbReference>
<dbReference type="Pfam" id="PF02016">
    <property type="entry name" value="Peptidase_S66"/>
    <property type="match status" value="1"/>
</dbReference>
<dbReference type="Pfam" id="PF17676">
    <property type="entry name" value="Peptidase_S66C"/>
    <property type="match status" value="1"/>
</dbReference>
<dbReference type="PIRSF" id="PIRSF028757">
    <property type="entry name" value="LD-carboxypeptidase"/>
    <property type="match status" value="1"/>
</dbReference>
<dbReference type="SUPFAM" id="SSF52317">
    <property type="entry name" value="Class I glutamine amidotransferase-like"/>
    <property type="match status" value="1"/>
</dbReference>
<dbReference type="SUPFAM" id="SSF141986">
    <property type="entry name" value="LD-carboxypeptidase A C-terminal domain-like"/>
    <property type="match status" value="1"/>
</dbReference>
<accession>Q9ZBI5</accession>
<evidence type="ECO:0000250" key="1"/>
<evidence type="ECO:0000305" key="2"/>